<keyword id="KW-0066">ATP synthesis</keyword>
<keyword id="KW-0067">ATP-binding</keyword>
<keyword id="KW-1003">Cell membrane</keyword>
<keyword id="KW-0139">CF(1)</keyword>
<keyword id="KW-0375">Hydrogen ion transport</keyword>
<keyword id="KW-0406">Ion transport</keyword>
<keyword id="KW-0472">Membrane</keyword>
<keyword id="KW-0547">Nucleotide-binding</keyword>
<keyword id="KW-1185">Reference proteome</keyword>
<keyword id="KW-1278">Translocase</keyword>
<keyword id="KW-0813">Transport</keyword>
<evidence type="ECO:0000255" key="1">
    <source>
        <dbReference type="HAMAP-Rule" id="MF_01347"/>
    </source>
</evidence>
<gene>
    <name evidence="1" type="primary">atpD</name>
    <name type="ordered locus">cauri_1074</name>
</gene>
<feature type="chain" id="PRO_1000166582" description="ATP synthase subunit beta">
    <location>
        <begin position="1"/>
        <end position="482"/>
    </location>
</feature>
<feature type="binding site" evidence="1">
    <location>
        <begin position="167"/>
        <end position="174"/>
    </location>
    <ligand>
        <name>ATP</name>
        <dbReference type="ChEBI" id="CHEBI:30616"/>
    </ligand>
</feature>
<protein>
    <recommendedName>
        <fullName evidence="1">ATP synthase subunit beta</fullName>
        <ecNumber evidence="1">7.1.2.2</ecNumber>
    </recommendedName>
    <alternativeName>
        <fullName evidence="1">ATP synthase F1 sector subunit beta</fullName>
    </alternativeName>
    <alternativeName>
        <fullName evidence="1">F-ATPase subunit beta</fullName>
    </alternativeName>
</protein>
<sequence length="482" mass="52192">MTTALQEQNTQSSATAGRVVRVIGPVVDVEFPRGGLPALYNALTVEVTLEAVAKTVTLEVAQHLGDNLVRAVSMAPTDGLVRGAAVTDTGKPISVPVGDVVKGHVFNALGDCLDQPGLGRDGEQWGIHREPPAFDQLEGKTEILETGIKVIDLLTPYVKGGKIGLFGGAGVGKTVLIQEMITRIAREFSGTSVFAGVGERTREGTDLFLEMEEMGVLQDTALVFGQMDEPPGVRMRVALSGLTMAEYFRDVQNQDVLLFIDNIFRFTQAGSEVSTLLGRMPSAVGYQPTLADEMGVLQERITSTKGKSITSLQAVYVPADDYTDPAPATTFAHLDATTELDRGIASKGIYPAVNPLTSTSRILEPSIVGERHYEVAQRVIGILQKNKELQDIIAILGMDELSEEDKITVQRARRIERFLGQNFFVAEKFTGLPGSYVPLADTIDAFERICNGEFDHYPEQAFNGLGGLDDVEAAYKKLTEKK</sequence>
<accession>C3PFR5</accession>
<dbReference type="EC" id="7.1.2.2" evidence="1"/>
<dbReference type="EMBL" id="CP001601">
    <property type="protein sequence ID" value="ACP32669.1"/>
    <property type="molecule type" value="Genomic_DNA"/>
</dbReference>
<dbReference type="RefSeq" id="WP_010187062.1">
    <property type="nucleotide sequence ID" value="NZ_ACLH01000006.1"/>
</dbReference>
<dbReference type="SMR" id="C3PFR5"/>
<dbReference type="STRING" id="548476.cauri_1074"/>
<dbReference type="GeneID" id="31923696"/>
<dbReference type="KEGG" id="car:cauri_1074"/>
<dbReference type="eggNOG" id="COG0055">
    <property type="taxonomic scope" value="Bacteria"/>
</dbReference>
<dbReference type="HOGENOM" id="CLU_022398_0_2_11"/>
<dbReference type="OrthoDB" id="9801639at2"/>
<dbReference type="Proteomes" id="UP000002077">
    <property type="component" value="Chromosome"/>
</dbReference>
<dbReference type="GO" id="GO:0005886">
    <property type="term" value="C:plasma membrane"/>
    <property type="evidence" value="ECO:0007669"/>
    <property type="project" value="UniProtKB-SubCell"/>
</dbReference>
<dbReference type="GO" id="GO:0045259">
    <property type="term" value="C:proton-transporting ATP synthase complex"/>
    <property type="evidence" value="ECO:0007669"/>
    <property type="project" value="UniProtKB-KW"/>
</dbReference>
<dbReference type="GO" id="GO:0005524">
    <property type="term" value="F:ATP binding"/>
    <property type="evidence" value="ECO:0007669"/>
    <property type="project" value="UniProtKB-UniRule"/>
</dbReference>
<dbReference type="GO" id="GO:0016887">
    <property type="term" value="F:ATP hydrolysis activity"/>
    <property type="evidence" value="ECO:0007669"/>
    <property type="project" value="InterPro"/>
</dbReference>
<dbReference type="GO" id="GO:0046933">
    <property type="term" value="F:proton-transporting ATP synthase activity, rotational mechanism"/>
    <property type="evidence" value="ECO:0007669"/>
    <property type="project" value="UniProtKB-UniRule"/>
</dbReference>
<dbReference type="CDD" id="cd18110">
    <property type="entry name" value="ATP-synt_F1_beta_C"/>
    <property type="match status" value="1"/>
</dbReference>
<dbReference type="CDD" id="cd18115">
    <property type="entry name" value="ATP-synt_F1_beta_N"/>
    <property type="match status" value="1"/>
</dbReference>
<dbReference type="CDD" id="cd01133">
    <property type="entry name" value="F1-ATPase_beta_CD"/>
    <property type="match status" value="1"/>
</dbReference>
<dbReference type="FunFam" id="1.10.1140.10:FF:000001">
    <property type="entry name" value="ATP synthase subunit beta"/>
    <property type="match status" value="1"/>
</dbReference>
<dbReference type="FunFam" id="2.40.10.170:FF:000005">
    <property type="entry name" value="ATP synthase subunit beta"/>
    <property type="match status" value="1"/>
</dbReference>
<dbReference type="FunFam" id="3.40.50.300:FF:000004">
    <property type="entry name" value="ATP synthase subunit beta"/>
    <property type="match status" value="1"/>
</dbReference>
<dbReference type="Gene3D" id="2.40.10.170">
    <property type="match status" value="1"/>
</dbReference>
<dbReference type="Gene3D" id="1.10.1140.10">
    <property type="entry name" value="Bovine Mitochondrial F1-atpase, Atp Synthase Beta Chain, Chain D, domain 3"/>
    <property type="match status" value="1"/>
</dbReference>
<dbReference type="Gene3D" id="3.40.50.300">
    <property type="entry name" value="P-loop containing nucleotide triphosphate hydrolases"/>
    <property type="match status" value="1"/>
</dbReference>
<dbReference type="HAMAP" id="MF_01347">
    <property type="entry name" value="ATP_synth_beta_bact"/>
    <property type="match status" value="1"/>
</dbReference>
<dbReference type="InterPro" id="IPR003593">
    <property type="entry name" value="AAA+_ATPase"/>
</dbReference>
<dbReference type="InterPro" id="IPR055190">
    <property type="entry name" value="ATP-synt_VA_C"/>
</dbReference>
<dbReference type="InterPro" id="IPR005722">
    <property type="entry name" value="ATP_synth_F1_bsu"/>
</dbReference>
<dbReference type="InterPro" id="IPR020003">
    <property type="entry name" value="ATPase_a/bsu_AS"/>
</dbReference>
<dbReference type="InterPro" id="IPR050053">
    <property type="entry name" value="ATPase_alpha/beta_chains"/>
</dbReference>
<dbReference type="InterPro" id="IPR004100">
    <property type="entry name" value="ATPase_F1/V1/A1_a/bsu_N"/>
</dbReference>
<dbReference type="InterPro" id="IPR036121">
    <property type="entry name" value="ATPase_F1/V1/A1_a/bsu_N_sf"/>
</dbReference>
<dbReference type="InterPro" id="IPR000194">
    <property type="entry name" value="ATPase_F1/V1/A1_a/bsu_nucl-bd"/>
</dbReference>
<dbReference type="InterPro" id="IPR024034">
    <property type="entry name" value="ATPase_F1/V1_b/a_C"/>
</dbReference>
<dbReference type="InterPro" id="IPR027417">
    <property type="entry name" value="P-loop_NTPase"/>
</dbReference>
<dbReference type="NCBIfam" id="TIGR01039">
    <property type="entry name" value="atpD"/>
    <property type="match status" value="1"/>
</dbReference>
<dbReference type="PANTHER" id="PTHR15184">
    <property type="entry name" value="ATP SYNTHASE"/>
    <property type="match status" value="1"/>
</dbReference>
<dbReference type="PANTHER" id="PTHR15184:SF71">
    <property type="entry name" value="ATP SYNTHASE SUBUNIT BETA, MITOCHONDRIAL"/>
    <property type="match status" value="1"/>
</dbReference>
<dbReference type="Pfam" id="PF00006">
    <property type="entry name" value="ATP-synt_ab"/>
    <property type="match status" value="1"/>
</dbReference>
<dbReference type="Pfam" id="PF02874">
    <property type="entry name" value="ATP-synt_ab_N"/>
    <property type="match status" value="1"/>
</dbReference>
<dbReference type="Pfam" id="PF22919">
    <property type="entry name" value="ATP-synt_VA_C"/>
    <property type="match status" value="1"/>
</dbReference>
<dbReference type="SMART" id="SM00382">
    <property type="entry name" value="AAA"/>
    <property type="match status" value="1"/>
</dbReference>
<dbReference type="SUPFAM" id="SSF47917">
    <property type="entry name" value="C-terminal domain of alpha and beta subunits of F1 ATP synthase"/>
    <property type="match status" value="1"/>
</dbReference>
<dbReference type="SUPFAM" id="SSF50615">
    <property type="entry name" value="N-terminal domain of alpha and beta subunits of F1 ATP synthase"/>
    <property type="match status" value="1"/>
</dbReference>
<dbReference type="SUPFAM" id="SSF52540">
    <property type="entry name" value="P-loop containing nucleoside triphosphate hydrolases"/>
    <property type="match status" value="1"/>
</dbReference>
<dbReference type="PROSITE" id="PS00152">
    <property type="entry name" value="ATPASE_ALPHA_BETA"/>
    <property type="match status" value="1"/>
</dbReference>
<name>ATPB_CORA7</name>
<proteinExistence type="inferred from homology"/>
<reference key="1">
    <citation type="journal article" date="2010" name="BMC Genomics">
        <title>Complete genome sequence and lifestyle of black-pigmented Corynebacterium aurimucosum ATCC 700975 (formerly C. nigricans CN-1) isolated from a vaginal swab of a woman with spontaneous abortion.</title>
        <authorList>
            <person name="Trost E."/>
            <person name="Gotker S."/>
            <person name="Schneider J."/>
            <person name="Schneiker-Bekel S."/>
            <person name="Szczepanowski R."/>
            <person name="Tilker A."/>
            <person name="Viehoever P."/>
            <person name="Arnold W."/>
            <person name="Bekel T."/>
            <person name="Blom J."/>
            <person name="Gartemann K.H."/>
            <person name="Linke B."/>
            <person name="Goesmann A."/>
            <person name="Puhler A."/>
            <person name="Shukla S.K."/>
            <person name="Tauch A."/>
        </authorList>
    </citation>
    <scope>NUCLEOTIDE SEQUENCE [LARGE SCALE GENOMIC DNA]</scope>
    <source>
        <strain>ATCC 700975 / DSM 44827 / CIP 107346 / CN-1</strain>
    </source>
</reference>
<comment type="function">
    <text evidence="1">Produces ATP from ADP in the presence of a proton gradient across the membrane. The catalytic sites are hosted primarily by the beta subunits.</text>
</comment>
<comment type="catalytic activity">
    <reaction evidence="1">
        <text>ATP + H2O + 4 H(+)(in) = ADP + phosphate + 5 H(+)(out)</text>
        <dbReference type="Rhea" id="RHEA:57720"/>
        <dbReference type="ChEBI" id="CHEBI:15377"/>
        <dbReference type="ChEBI" id="CHEBI:15378"/>
        <dbReference type="ChEBI" id="CHEBI:30616"/>
        <dbReference type="ChEBI" id="CHEBI:43474"/>
        <dbReference type="ChEBI" id="CHEBI:456216"/>
        <dbReference type="EC" id="7.1.2.2"/>
    </reaction>
</comment>
<comment type="subunit">
    <text evidence="1">F-type ATPases have 2 components, CF(1) - the catalytic core - and CF(0) - the membrane proton channel. CF(1) has five subunits: alpha(3), beta(3), gamma(1), delta(1), epsilon(1). CF(0) has three main subunits: a(1), b(2) and c(9-12). The alpha and beta chains form an alternating ring which encloses part of the gamma chain. CF(1) is attached to CF(0) by a central stalk formed by the gamma and epsilon chains, while a peripheral stalk is formed by the delta and b chains.</text>
</comment>
<comment type="subcellular location">
    <subcellularLocation>
        <location evidence="1">Cell membrane</location>
        <topology evidence="1">Peripheral membrane protein</topology>
    </subcellularLocation>
</comment>
<comment type="similarity">
    <text evidence="1">Belongs to the ATPase alpha/beta chains family.</text>
</comment>
<organism>
    <name type="scientific">Corynebacterium aurimucosum (strain ATCC 700975 / DSM 44827 / CIP 107346 / CN-1)</name>
    <name type="common">Corynebacterium nigricans</name>
    <dbReference type="NCBI Taxonomy" id="548476"/>
    <lineage>
        <taxon>Bacteria</taxon>
        <taxon>Bacillati</taxon>
        <taxon>Actinomycetota</taxon>
        <taxon>Actinomycetes</taxon>
        <taxon>Mycobacteriales</taxon>
        <taxon>Corynebacteriaceae</taxon>
        <taxon>Corynebacterium</taxon>
    </lineage>
</organism>